<evidence type="ECO:0000250" key="1">
    <source>
        <dbReference type="UniProtKB" id="P56785"/>
    </source>
</evidence>
<evidence type="ECO:0000255" key="2"/>
<evidence type="ECO:0000256" key="3">
    <source>
        <dbReference type="SAM" id="MobiDB-lite"/>
    </source>
</evidence>
<evidence type="ECO:0000305" key="4"/>
<name>TI214_CUSGR</name>
<reference key="1">
    <citation type="journal article" date="2007" name="BMC Plant Biol.">
        <title>Complete DNA sequences of the plastid genomes of two parasitic flowering plant species, Cuscuta reflexa and Cuscuta gronovii.</title>
        <authorList>
            <person name="Funk H.T."/>
            <person name="Berg S."/>
            <person name="Krupinska K."/>
            <person name="Maier U.-G."/>
            <person name="Krause K."/>
        </authorList>
    </citation>
    <scope>NUCLEOTIDE SEQUENCE [LARGE SCALE GENOMIC DNA]</scope>
</reference>
<sequence length="1673" mass="197167">MNFQYLVKIVAGSYYNISSSILSKIINSVIMAGLYYGFLTALALKTSYILLIHAMVRENPNHKAAAITGLILGQLGQLLSIYYAPLYIAFGRPYTLTVLTLIYFLVNLFGNNLDKNASSFGAYGNTIRNLEILCIFLNNLILQLLNTCIFPSSTLARVVNVYLFRCNNKMVFLISSFSAWLIGQILVLMCCQLVLGRGQNKNSIRSLIQKYLVRNSMFFLVVNCLFGSSLFILTIQSLGRIPLPIPTQKLSEISRIEKREEERLKKSGVAKEGKSTEDEEDLSHEKDSLKKEPYSKLENEDEEIEKDIEQAIGTLLFDYKRWTRPFRYIKNNQFEQAVRNEMSQYFFATQQSDGKSRICFTYPVNLSMFWKGISFLSRDKNYSNKLNRHWVERNKKKLKSLKRDLVNRIKNLDKTLKIEFGTTRTRLCTCIHDDETKQEYVPEEYDPLLAGGYRGRIKKEQAILQKQENETLTHPLDTLIDVLENNTNAQLFKTNPIDNQKINFEEELRKKVPRWSYKLITELEQISYYRNPPDDHDIRTRKAKSLVVFDPSKHPNMETMEDNGNIQNNSSDKTINPQNNLTNLKPRTSENDPDDNTTEKEPKDDKSYSIRYSHQSDFRHGLIKDSMRSLRRKIVIKDLFKGNVHSPLFFERRKKKNLFSFSGLVKLKKLFIPGSAQKEFGDLKDSNKKLTIKDKKQQETKERIEIAEAWDSFELTQVLRGVLLVTQSSLRRDILLPSLIIIKNLGRILLFQSSELSDDFKELAKETHVPCTYNGVPLGEKEFPRNWLTEGIQIKILSPFCLKPWNEEKKPLPASENFCFLTIWGQETDQIFGRPRRRPSFFKPFLTKLDTTLKKINLFQFFKEKRTPESNMVKEQKVDDLSDNILNEFQFSKREKLEAITNRTSIIKTKLETIAEEKKKVTRDLDRSLSKKSLKRIRFKLVSNLFPFQSFLKLFIQEIYNLFLRNILLISGLLKKILNREKEKLINQSCSKNEKMKKVHKKFNFSLNRKSKPSTNFSNLSQAYVFYKISQQIASFSVCKLRSILNQQVKAIFVKPEIKEFFARHGLIQTQEMDKKSIQLRTPQWKHWLRVNSQHHLSQILWFSFGAKKENWRKKINRCNKQSLQKRNSSGNSNLDDSKNRNTDNLILNKNQKDNFEKCYRYDVLSSKFIKFEKKKISFIHRSPLSLTRQHQISYHKNMSQNFLFALPKNMSVKNLMGKSQRMHIPYIEKDFDRKYLSFENIEFSLKKKINIESWIPLTSRGNKTKTYNYEFLDELELMEFIDQIYKKEKELLFPCIERNNKIRNAKSKYSFIDWMGLNEELLKHPVTNLELWFFPEFVSLLNIYKLKPWVLQSQLLFSKLTFNKLLSKQQNQTTTKMNTETKNKQKSKVENEKNKKTENQQNAETKNKQKSKTENEGNKETENQQNDESEDDPQLAYIRSFMKKHLLFQLRGESIFKKSGFKNIQILCLLLRLMNQNEMLFSSIQRQKLNLHIMPEIGIKELTLEVLEEIGVPEFLKEKRVNFEPFPLYINKNGKFLMYQLLNMSLVHNIKYPTNNESRNQGVITTQKNNNMASHIPENILSSRRRRELRILMCLNHNKKKCESTEATNKSFIYKKKCAKIWEEQKSTIEFFIWPNSRFEDLTCMNRYWFYTNNGSRFSMLRIFMYLPLKNY</sequence>
<organism>
    <name type="scientific">Cuscuta gronovii</name>
    <name type="common">Common dodder</name>
    <name type="synonym">Epithymum gronovii</name>
    <dbReference type="NCBI Taxonomy" id="35886"/>
    <lineage>
        <taxon>Eukaryota</taxon>
        <taxon>Viridiplantae</taxon>
        <taxon>Streptophyta</taxon>
        <taxon>Embryophyta</taxon>
        <taxon>Tracheophyta</taxon>
        <taxon>Spermatophyta</taxon>
        <taxon>Magnoliopsida</taxon>
        <taxon>eudicotyledons</taxon>
        <taxon>Gunneridae</taxon>
        <taxon>Pentapetalae</taxon>
        <taxon>asterids</taxon>
        <taxon>lamiids</taxon>
        <taxon>Solanales</taxon>
        <taxon>Convolvulaceae</taxon>
        <taxon>Cuscuteae</taxon>
        <taxon>Cuscuta</taxon>
        <taxon>Cuscuta subgen. Grammica</taxon>
        <taxon>Cuscuta sect. Oxycarpae</taxon>
    </lineage>
</organism>
<comment type="function">
    <text evidence="1">Involved in protein precursor import into chloroplasts. May be part of an intermediate translocation complex acting as a protein-conducting channel at the inner envelope.</text>
</comment>
<comment type="subunit">
    <text evidence="1">Part of the Tic complex.</text>
</comment>
<comment type="subcellular location">
    <subcellularLocation>
        <location evidence="1">Plastid</location>
        <location evidence="1">Chloroplast inner membrane</location>
        <topology evidence="2">Multi-pass membrane protein</topology>
    </subcellularLocation>
</comment>
<comment type="similarity">
    <text evidence="4">Belongs to the TIC214 family.</text>
</comment>
<comment type="caution">
    <text evidence="4">Young tissue from this organism is photosynthetic and contains some thylakoids, although the photosynthetic activity does not exceed the light compensation point.</text>
</comment>
<accession>A7M944</accession>
<geneLocation type="plastid"/>
<feature type="chain" id="PRO_0000326570" description="Protein TIC 214">
    <location>
        <begin position="1"/>
        <end position="1673"/>
    </location>
</feature>
<feature type="transmembrane region" description="Helical" evidence="2">
    <location>
        <begin position="32"/>
        <end position="52"/>
    </location>
</feature>
<feature type="transmembrane region" description="Helical" evidence="2">
    <location>
        <begin position="70"/>
        <end position="90"/>
    </location>
</feature>
<feature type="transmembrane region" description="Helical" evidence="2">
    <location>
        <begin position="93"/>
        <end position="113"/>
    </location>
</feature>
<feature type="transmembrane region" description="Helical" evidence="2">
    <location>
        <begin position="130"/>
        <end position="150"/>
    </location>
</feature>
<feature type="transmembrane region" description="Helical" evidence="2">
    <location>
        <begin position="170"/>
        <end position="190"/>
    </location>
</feature>
<feature type="transmembrane region" description="Helical" evidence="2">
    <location>
        <begin position="218"/>
        <end position="238"/>
    </location>
</feature>
<feature type="region of interest" description="Disordered" evidence="3">
    <location>
        <begin position="264"/>
        <end position="302"/>
    </location>
</feature>
<feature type="region of interest" description="Disordered" evidence="3">
    <location>
        <begin position="547"/>
        <end position="611"/>
    </location>
</feature>
<feature type="region of interest" description="Disordered" evidence="3">
    <location>
        <begin position="1120"/>
        <end position="1146"/>
    </location>
</feature>
<feature type="region of interest" description="Disordered" evidence="3">
    <location>
        <begin position="1370"/>
        <end position="1433"/>
    </location>
</feature>
<feature type="compositionally biased region" description="Basic and acidic residues" evidence="3">
    <location>
        <begin position="264"/>
        <end position="276"/>
    </location>
</feature>
<feature type="compositionally biased region" description="Basic and acidic residues" evidence="3">
    <location>
        <begin position="283"/>
        <end position="298"/>
    </location>
</feature>
<feature type="compositionally biased region" description="Polar residues" evidence="3">
    <location>
        <begin position="562"/>
        <end position="586"/>
    </location>
</feature>
<feature type="compositionally biased region" description="Basic and acidic residues" evidence="3">
    <location>
        <begin position="597"/>
        <end position="611"/>
    </location>
</feature>
<feature type="compositionally biased region" description="Polar residues" evidence="3">
    <location>
        <begin position="1120"/>
        <end position="1135"/>
    </location>
</feature>
<feature type="compositionally biased region" description="Low complexity" evidence="3">
    <location>
        <begin position="1370"/>
        <end position="1379"/>
    </location>
</feature>
<feature type="compositionally biased region" description="Basic and acidic residues" evidence="3">
    <location>
        <begin position="1380"/>
        <end position="1399"/>
    </location>
</feature>
<feature type="compositionally biased region" description="Basic and acidic residues" evidence="3">
    <location>
        <begin position="1406"/>
        <end position="1423"/>
    </location>
</feature>
<gene>
    <name evidence="1" type="primary">TIC214</name>
    <name type="synonym">ycf1</name>
</gene>
<protein>
    <recommendedName>
        <fullName evidence="1">Protein TIC 214</fullName>
    </recommendedName>
    <alternativeName>
        <fullName evidence="1">Translocon at the inner envelope membrane of chloroplasts 214</fullName>
        <shortName evidence="1">AtTIC214</shortName>
    </alternativeName>
</protein>
<keyword id="KW-0150">Chloroplast</keyword>
<keyword id="KW-0472">Membrane</keyword>
<keyword id="KW-0934">Plastid</keyword>
<keyword id="KW-1001">Plastid inner membrane</keyword>
<keyword id="KW-0653">Protein transport</keyword>
<keyword id="KW-0812">Transmembrane</keyword>
<keyword id="KW-1133">Transmembrane helix</keyword>
<keyword id="KW-0813">Transport</keyword>
<dbReference type="EMBL" id="AM711639">
    <property type="protein sequence ID" value="CAM98372.1"/>
    <property type="molecule type" value="Genomic_DNA"/>
</dbReference>
<dbReference type="RefSeq" id="YP_001430085.1">
    <property type="nucleotide sequence ID" value="NC_009765.1"/>
</dbReference>
<dbReference type="GeneID" id="5536778"/>
<dbReference type="GO" id="GO:0009706">
    <property type="term" value="C:chloroplast inner membrane"/>
    <property type="evidence" value="ECO:0007669"/>
    <property type="project" value="UniProtKB-SubCell"/>
</dbReference>
<dbReference type="GO" id="GO:0015031">
    <property type="term" value="P:protein transport"/>
    <property type="evidence" value="ECO:0007669"/>
    <property type="project" value="UniProtKB-KW"/>
</dbReference>
<dbReference type="InterPro" id="IPR008896">
    <property type="entry name" value="TIC214"/>
</dbReference>
<dbReference type="PANTHER" id="PTHR33163:SF40">
    <property type="entry name" value="PROTEIN TIC 214"/>
    <property type="match status" value="1"/>
</dbReference>
<dbReference type="PANTHER" id="PTHR33163">
    <property type="entry name" value="PROTEIN TIC 214-RELATED"/>
    <property type="match status" value="1"/>
</dbReference>
<dbReference type="Pfam" id="PF05758">
    <property type="entry name" value="Ycf1"/>
    <property type="match status" value="4"/>
</dbReference>
<proteinExistence type="inferred from homology"/>